<protein>
    <recommendedName>
        <fullName evidence="1">Photosystem II reaction center protein X</fullName>
    </recommendedName>
</protein>
<accession>Q9F1R6</accession>
<accession>Q8DHE6</accession>
<keyword id="KW-0002">3D-structure</keyword>
<keyword id="KW-0903">Direct protein sequencing</keyword>
<keyword id="KW-0472">Membrane</keyword>
<keyword id="KW-0602">Photosynthesis</keyword>
<keyword id="KW-0604">Photosystem II</keyword>
<keyword id="KW-1185">Reference proteome</keyword>
<keyword id="KW-0793">Thylakoid</keyword>
<keyword id="KW-0812">Transmembrane</keyword>
<keyword id="KW-1133">Transmembrane helix</keyword>
<organism>
    <name type="scientific">Thermosynechococcus vestitus (strain NIES-2133 / IAM M-273 / BP-1)</name>
    <dbReference type="NCBI Taxonomy" id="197221"/>
    <lineage>
        <taxon>Bacteria</taxon>
        <taxon>Bacillati</taxon>
        <taxon>Cyanobacteriota</taxon>
        <taxon>Cyanophyceae</taxon>
        <taxon>Acaryochloridales</taxon>
        <taxon>Thermosynechococcaceae</taxon>
        <taxon>Thermosynechococcus</taxon>
    </lineage>
</organism>
<name>PSBX_THEVB</name>
<proteinExistence type="evidence at protein level"/>
<reference key="1">
    <citation type="journal article" date="2001" name="Plant Cell Physiol.">
        <title>Targeted disruption of psbX and biochemical characterization of photosystem II complex in the thermophilic cyanobacterium Synechococcus elongatus.</title>
        <authorList>
            <person name="Katoh H."/>
            <person name="Ikeuchi M."/>
        </authorList>
    </citation>
    <scope>NUCLEOTIDE SEQUENCE [GENOMIC DNA]</scope>
    <scope>FUNCTION</scope>
</reference>
<reference key="2">
    <citation type="journal article" date="2002" name="DNA Res.">
        <title>Complete genome structure of the thermophilic cyanobacterium Thermosynechococcus elongatus BP-1.</title>
        <authorList>
            <person name="Nakamura Y."/>
            <person name="Kaneko T."/>
            <person name="Sato S."/>
            <person name="Ikeuchi M."/>
            <person name="Katoh H."/>
            <person name="Sasamoto S."/>
            <person name="Watanabe A."/>
            <person name="Iriguchi M."/>
            <person name="Kawashima K."/>
            <person name="Kimura T."/>
            <person name="Kishida Y."/>
            <person name="Kiyokawa C."/>
            <person name="Kohara M."/>
            <person name="Matsumoto M."/>
            <person name="Matsuno A."/>
            <person name="Nakazaki N."/>
            <person name="Shimpo S."/>
            <person name="Sugimoto M."/>
            <person name="Takeuchi C."/>
            <person name="Yamada M."/>
            <person name="Tabata S."/>
        </authorList>
    </citation>
    <scope>NUCLEOTIDE SEQUENCE [LARGE SCALE GENOMIC DNA]</scope>
    <source>
        <strain>NIES-2133 / IAM M-273 / BP-1</strain>
    </source>
</reference>
<reference key="3">
    <citation type="journal article" date="2007" name="Biochim. Biophys. Acta">
        <title>Ycf12 is a core subunit in the photosystem II complex.</title>
        <authorList>
            <person name="Kashino Y."/>
            <person name="Takahashi T."/>
            <person name="Inoue-Kashino N."/>
            <person name="Ban A."/>
            <person name="Ikeda Y."/>
            <person name="Satoh K."/>
            <person name="Sugiura M."/>
        </authorList>
    </citation>
    <scope>PROTEIN SEQUENCE OF 2-14</scope>
    <scope>COFACTOR</scope>
    <scope>SUBCELLULAR LOCATION</scope>
</reference>
<reference key="4">
    <citation type="journal article" date="2007" name="Plant Cell Physiol.">
        <title>Absence of the PsbZ subunit prevents association of PsbK and Ycf12 with the PSII complex in the thermophilic cyanobacterium Thermosynechococcus elongatus BP-1.</title>
        <authorList>
            <person name="Iwai M."/>
            <person name="Suzuki T."/>
            <person name="Dohmae N."/>
            <person name="Inoue Y."/>
            <person name="Ikeuchi M."/>
        </authorList>
    </citation>
    <scope>PROTEIN SEQUENCE OF 2-9</scope>
    <scope>COFACTOR</scope>
    <scope>SUBCELLULAR LOCATION</scope>
</reference>
<reference key="5">
    <citation type="journal article" date="2004" name="Science">
        <title>Architecture of the photosynthetic oxygen-evolving center.</title>
        <authorList>
            <person name="Ferreira K.N."/>
            <person name="Iverson T.M."/>
            <person name="Maghlaoui K."/>
            <person name="Barber J."/>
            <person name="Iwata S."/>
        </authorList>
    </citation>
    <scope>X-RAY CRYSTALLOGRAPHY (3.5 ANGSTROMS) OF 2-41 IN PHOTOSYSTEM II</scope>
    <scope>COFACTOR</scope>
    <scope>SUBUNIT</scope>
    <scope>SUBCELLULAR LOCATION</scope>
</reference>
<reference key="6">
    <citation type="journal article" date="2009" name="Nat. Struct. Mol. Biol.">
        <title>Cyanobacterial photosystem II at 2.9-A resolution and the role of quinones, lipids, channels and chloride.</title>
        <authorList>
            <person name="Guskov A."/>
            <person name="Kern J."/>
            <person name="Gabdulkhakov A."/>
            <person name="Broser M."/>
            <person name="Zouni A."/>
            <person name="Saenger W."/>
        </authorList>
    </citation>
    <scope>X-RAY CRYSTALLOGRAPHY (2.90 ANGSTROMS) OF 2-41 IN PHOTOSYSTEM II</scope>
    <scope>COFACTOR</scope>
    <scope>SUBUNIT</scope>
    <scope>SUBCELLULAR LOCATION</scope>
    <scope>MASS SPECTROMETRY</scope>
    <scope>TOPOLOGY</scope>
    <source>
        <strain>NIES-2133 / IAM M-273 / BP-1</strain>
    </source>
</reference>
<reference key="7">
    <citation type="journal article" date="2010" name="J. Biol. Chem.">
        <title>Crystal structure of monomeric photosystem II from Thermosynechococcus elongatus at 3.6 A resolution.</title>
        <authorList>
            <person name="Broser M."/>
            <person name="Gabdulkhakov A."/>
            <person name="Kern J."/>
            <person name="Guskov A."/>
            <person name="Muh F."/>
            <person name="Saenger W."/>
            <person name="Zouni A."/>
        </authorList>
    </citation>
    <scope>X-RAY CRYSTALLOGRAPHY (3.60 ANGSTROMS) OF 2-41 IN PHOTOSYSTEM II</scope>
    <scope>FUNCTION</scope>
    <scope>COFACTOR</scope>
    <scope>SUBUNIT</scope>
    <scope>SUBCELLULAR LOCATION</scope>
    <scope>MASS SPECTROMETRY</scope>
    <source>
        <strain>NIES-2133 / IAM M-273 / BP-1</strain>
    </source>
</reference>
<reference key="8">
    <citation type="journal article" date="2011" name="J. Biol. Chem.">
        <title>Structural basis of cyanobacterial photosystem II inhibition by the herbicide terbutryn.</title>
        <authorList>
            <person name="Broser M."/>
            <person name="Glockner C."/>
            <person name="Gabdulkhakov A."/>
            <person name="Guskov A."/>
            <person name="Buchta J."/>
            <person name="Kern J."/>
            <person name="Muh F."/>
            <person name="Dau H."/>
            <person name="Saenger W."/>
            <person name="Zouni A."/>
        </authorList>
    </citation>
    <scope>X-RAY CRYSTALLOGRAPHY (3.20 ANGSTROMS) IN PHOTOSYSTEM II</scope>
    <scope>FUNCTION</scope>
    <scope>COFACTOR</scope>
    <scope>SUBUNIT</scope>
    <scope>SUBCELLULAR LOCATION</scope>
</reference>
<reference key="9">
    <citation type="journal article" date="2012" name="Proc. Natl. Acad. Sci. U.S.A.">
        <title>Room temperature femtosecond X-ray diffraction of photosystem II microcrystals.</title>
        <authorList>
            <person name="Kern J."/>
            <person name="Alonso-Mori R."/>
            <person name="Hellmich J."/>
            <person name="Tran R."/>
            <person name="Hattne J."/>
            <person name="Laksmono H."/>
            <person name="Glockner C."/>
            <person name="Echols N."/>
            <person name="Sierra R.G."/>
            <person name="Sellberg J."/>
            <person name="Lassalle-Kaiser B."/>
            <person name="Gildea R.J."/>
            <person name="Glatzel P."/>
            <person name="Grosse-Kunstleve R.W."/>
            <person name="Latimer M.J."/>
            <person name="McQueen T.A."/>
            <person name="DiFiore D."/>
            <person name="Fry A.R."/>
            <person name="Messerschmidt M."/>
            <person name="Miahnahri A."/>
            <person name="Schafer D.W."/>
            <person name="Seibert M.M."/>
            <person name="Sokaras D."/>
            <person name="Weng T.C."/>
            <person name="Zwart P.H."/>
            <person name="White W.E."/>
            <person name="Adams P.D."/>
            <person name="Bogan M.J."/>
            <person name="Boutet S."/>
            <person name="Williams G.J."/>
            <person name="Messinger J."/>
            <person name="Sauter N.K."/>
            <person name="Zouni A."/>
            <person name="Bergmann U."/>
            <person name="Yano J."/>
            <person name="Yachandra V.K."/>
        </authorList>
    </citation>
    <scope>X-RAY CRYSTALLOGRAPHY (6.56 ANGSTROMS) OF 2-41 IN PHOTOSYSTEM II</scope>
    <scope>COFACTOR</scope>
    <scope>SUBUNIT</scope>
    <scope>SUBCELLULAR LOCATION</scope>
    <source>
        <strain>NIES-2133 / IAM M-273 / BP-1</strain>
    </source>
</reference>
<reference key="10">
    <citation type="journal article" date="2013" name="Science">
        <title>Simultaneous femtosecond X-ray spectroscopy and diffraction of photosystem II at room temperature.</title>
        <authorList>
            <person name="Kern J."/>
            <person name="Alonso-Mori R."/>
            <person name="Tran R."/>
            <person name="Hattne J."/>
            <person name="Gildea R.J."/>
            <person name="Echols N."/>
            <person name="Glockner C."/>
            <person name="Hellmich J."/>
            <person name="Laksmono H."/>
            <person name="Sierra R.G."/>
            <person name="Lassalle-Kaiser B."/>
            <person name="Koroidov S."/>
            <person name="Lampe A."/>
            <person name="Han G."/>
            <person name="Gul S."/>
            <person name="Difiore D."/>
            <person name="Milathianaki D."/>
            <person name="Fry A.R."/>
            <person name="Miahnahri A."/>
            <person name="Schafer D.W."/>
            <person name="Messerschmidt M."/>
            <person name="Seibert M.M."/>
            <person name="Koglin J.E."/>
            <person name="Sokaras D."/>
            <person name="Weng T.C."/>
            <person name="Sellberg J."/>
            <person name="Latimer M.J."/>
            <person name="Grosse-Kunstleve R.W."/>
            <person name="Zwart P.H."/>
            <person name="White W.E."/>
            <person name="Glatzel P."/>
            <person name="Adams P.D."/>
            <person name="Bogan M.J."/>
            <person name="Williams G.J."/>
            <person name="Boutet S."/>
            <person name="Messinger J."/>
            <person name="Zouni A."/>
            <person name="Sauter N.K."/>
            <person name="Yachandra V.K."/>
            <person name="Bergmann U."/>
            <person name="Yano J."/>
        </authorList>
    </citation>
    <scope>X-RAY CRYSTALLOGRAPHY (5.70 ANGSTROMS) IN PHOTOSYSTEM II</scope>
    <scope>COFACTOR</scope>
    <scope>SUBUNIT</scope>
    <scope>SUBCELLULAR LOCATION</scope>
    <source>
        <strain>NIES-2133 / IAM M-273 / BP-1</strain>
    </source>
</reference>
<reference key="11">
    <citation type="journal article" date="2014" name="Nature">
        <title>Serial time-resolved crystallography of photosystem II using a femtosecond X-ray laser.</title>
        <authorList>
            <person name="Kupitz C."/>
            <person name="Basu S."/>
            <person name="Grotjohann I."/>
            <person name="Fromme R."/>
            <person name="Zatsepin N.A."/>
            <person name="Rendek K.N."/>
            <person name="Hunter M.S."/>
            <person name="Shoeman R.L."/>
            <person name="White T.A."/>
            <person name="Wang D."/>
            <person name="James D."/>
            <person name="Yang J.H."/>
            <person name="Cobb D.E."/>
            <person name="Reeder B."/>
            <person name="Sierra R.G."/>
            <person name="Liu H."/>
            <person name="Barty A."/>
            <person name="Aquila A.L."/>
            <person name="Deponte D."/>
            <person name="Kirian R.A."/>
            <person name="Bari S."/>
            <person name="Bergkamp J.J."/>
            <person name="Beyerlein K.R."/>
            <person name="Bogan M.J."/>
            <person name="Caleman C."/>
            <person name="Chao T.C."/>
            <person name="Conrad C.E."/>
            <person name="Davis K.M."/>
            <person name="Fleckenstein H."/>
            <person name="Galli L."/>
            <person name="Hau-Riege S.P."/>
            <person name="Kassemeyer S."/>
            <person name="Laksmono H."/>
            <person name="Liang M."/>
            <person name="Lomb L."/>
            <person name="Marchesini S."/>
            <person name="Martin A.V."/>
            <person name="Messerschmidt M."/>
            <person name="Milathianaki D."/>
            <person name="Nass K."/>
            <person name="Ros A."/>
            <person name="Roy-Chowdhury S."/>
            <person name="Schmidt K."/>
            <person name="Seibert M."/>
            <person name="Steinbrener J."/>
            <person name="Stellato F."/>
            <person name="Yan L."/>
            <person name="Yoon C."/>
            <person name="Moore T.A."/>
            <person name="Moore A.L."/>
            <person name="Pushkar Y."/>
            <person name="Williams G.J."/>
            <person name="Boutet S."/>
            <person name="Doak R.B."/>
            <person name="Weierstall U."/>
            <person name="Frank M."/>
            <person name="Chapman H.N."/>
            <person name="Spence J.C."/>
            <person name="Fromme P."/>
        </authorList>
    </citation>
    <scope>X-RAY CRYSTALLOGRAPHY (5.00 ANGSTROMS) OF 2-40 IN PHOTOSYSTEM II</scope>
    <scope>COFACTOR</scope>
    <scope>SUBUNIT</scope>
    <scope>SUBCELLULAR LOCATION</scope>
    <source>
        <strain>NIES-2133 / IAM M-273 / BP-1</strain>
    </source>
</reference>
<reference key="12">
    <citation type="journal article" date="2014" name="Nat. Commun.">
        <title>Taking snapshots of photosynthetic water oxidation using femtosecond X-ray diffraction and spectroscopy.</title>
        <authorList>
            <person name="Kern J."/>
            <person name="Tran R."/>
            <person name="Alonso-Mori R."/>
            <person name="Koroidov S."/>
            <person name="Echols N."/>
            <person name="Hattne J."/>
            <person name="Ibrahim M."/>
            <person name="Gul S."/>
            <person name="Laksmono H."/>
            <person name="Sierra R.G."/>
            <person name="Gildea R.J."/>
            <person name="Han G."/>
            <person name="Hellmich J."/>
            <person name="Lassalle-Kaiser B."/>
            <person name="Chatterjee R."/>
            <person name="Brewster A.S."/>
            <person name="Stan C.A."/>
            <person name="Gloeckner C."/>
            <person name="Lampe A."/>
            <person name="DiFiore D."/>
            <person name="Milathianaki D."/>
            <person name="Fry A.R."/>
            <person name="Seibert M.M."/>
            <person name="Koglin J.E."/>
            <person name="Gallo E."/>
            <person name="Uhlig J."/>
            <person name="Sokaras D."/>
            <person name="Weng T.C."/>
            <person name="Zwart P.H."/>
            <person name="Skinner D.E."/>
            <person name="Bogan M.J."/>
            <person name="Messerschmidt M."/>
            <person name="Glatzel P."/>
            <person name="Williams G.J."/>
            <person name="Boutet S."/>
            <person name="Adams P.D."/>
            <person name="Zouni A."/>
            <person name="Messinger J."/>
            <person name="Sauter N.K."/>
            <person name="Bergmann U."/>
            <person name="Yano J."/>
            <person name="Yachandra V.K."/>
        </authorList>
    </citation>
    <scope>X-RAY CRYSTALLOGRAPHY (4.50 ANGSTROMS) IN PHOTOSYSTEM II</scope>
    <scope>FUNCTION</scope>
    <scope>COFACTOR</scope>
    <scope>SUBUNIT</scope>
    <scope>SUBCELLULAR LOCATION</scope>
    <source>
        <strain>NIES-2133 / IAM M-273 / BP-1</strain>
    </source>
</reference>
<reference evidence="15 16 17" key="13">
    <citation type="journal article" date="2021" name="Nat. Plants">
        <title>Structural insights into photosystem II assembly.</title>
        <authorList>
            <person name="Zabret J."/>
            <person name="Bohn S."/>
            <person name="Schuller S.K."/>
            <person name="Arnolds O."/>
            <person name="Moller M."/>
            <person name="Meier-Credo J."/>
            <person name="Liauw P."/>
            <person name="Chan A."/>
            <person name="Tajkhorshid E."/>
            <person name="Langer J.D."/>
            <person name="Stoll R."/>
            <person name="Krieger-Liszkay A."/>
            <person name="Engel B.D."/>
            <person name="Rudack T."/>
            <person name="Schuller J.M."/>
            <person name="Nowaczyk M.M."/>
        </authorList>
    </citation>
    <scope>STRUCTURE BY ELECTRON MICROSCOPY (2.68 ANGSTROMS) IN PSII-I ASSEMBLY COMPLEX</scope>
    <scope>SUBUNIT</scope>
    <scope>SUBCELLULAR LOCATION</scope>
    <scope>TOPOLOGY</scope>
    <source>
        <strain>NIES-2133 / IAM M-273 / BP-1</strain>
    </source>
</reference>
<dbReference type="EMBL" id="AB046708">
    <property type="protein sequence ID" value="BAB16114.1"/>
    <property type="status" value="ALT_INIT"/>
    <property type="molecule type" value="Genomic_DNA"/>
</dbReference>
<dbReference type="EMBL" id="BA000039">
    <property type="protein sequence ID" value="BAC09565.1"/>
    <property type="status" value="ALT_INIT"/>
    <property type="molecule type" value="Genomic_DNA"/>
</dbReference>
<dbReference type="RefSeq" id="NP_682803.1">
    <property type="nucleotide sequence ID" value="NC_004113.1"/>
</dbReference>
<dbReference type="RefSeq" id="WP_011057848.1">
    <property type="nucleotide sequence ID" value="NC_004113.1"/>
</dbReference>
<dbReference type="PDB" id="1S5L">
    <property type="method" value="X-ray"/>
    <property type="resolution" value="3.50 A"/>
    <property type="chains" value="X/x=2-41"/>
</dbReference>
<dbReference type="PDB" id="3KZI">
    <property type="method" value="X-ray"/>
    <property type="resolution" value="3.60 A"/>
    <property type="chains" value="X=2-41"/>
</dbReference>
<dbReference type="PDB" id="4FBY">
    <property type="method" value="X-ray"/>
    <property type="resolution" value="6.56 A"/>
    <property type="chains" value="X/j=2-41"/>
</dbReference>
<dbReference type="PDB" id="4IXQ">
    <property type="method" value="X-ray"/>
    <property type="resolution" value="5.70 A"/>
    <property type="chains" value="X/x=1-41"/>
</dbReference>
<dbReference type="PDB" id="4IXR">
    <property type="method" value="X-ray"/>
    <property type="resolution" value="5.90 A"/>
    <property type="chains" value="X/x=1-41"/>
</dbReference>
<dbReference type="PDB" id="4PBU">
    <property type="method" value="X-ray"/>
    <property type="resolution" value="5.00 A"/>
    <property type="chains" value="X/x=2-40"/>
</dbReference>
<dbReference type="PDB" id="4PJ0">
    <property type="method" value="X-ray"/>
    <property type="resolution" value="2.44 A"/>
    <property type="chains" value="X/x=1-41"/>
</dbReference>
<dbReference type="PDB" id="4RVY">
    <property type="method" value="X-ray"/>
    <property type="resolution" value="5.50 A"/>
    <property type="chains" value="X/x=2-40"/>
</dbReference>
<dbReference type="PDB" id="4TNH">
    <property type="method" value="X-ray"/>
    <property type="resolution" value="4.90 A"/>
    <property type="chains" value="X/x=1-41"/>
</dbReference>
<dbReference type="PDB" id="4TNI">
    <property type="method" value="X-ray"/>
    <property type="resolution" value="4.60 A"/>
    <property type="chains" value="X/x=1-41"/>
</dbReference>
<dbReference type="PDB" id="4TNJ">
    <property type="method" value="X-ray"/>
    <property type="resolution" value="4.50 A"/>
    <property type="chains" value="X/x=1-41"/>
</dbReference>
<dbReference type="PDB" id="4TNK">
    <property type="method" value="X-ray"/>
    <property type="resolution" value="5.20 A"/>
    <property type="chains" value="X/x=1-41"/>
</dbReference>
<dbReference type="PDB" id="4V62">
    <property type="method" value="X-ray"/>
    <property type="resolution" value="2.90 A"/>
    <property type="chains" value="AX/BX=2-41"/>
</dbReference>
<dbReference type="PDB" id="4V82">
    <property type="method" value="X-ray"/>
    <property type="resolution" value="3.20 A"/>
    <property type="chains" value="AX/BX=1-41"/>
</dbReference>
<dbReference type="PDB" id="5E79">
    <property type="method" value="X-ray"/>
    <property type="resolution" value="3.50 A"/>
    <property type="chains" value="X/x=2-40"/>
</dbReference>
<dbReference type="PDB" id="5E7C">
    <property type="method" value="X-ray"/>
    <property type="resolution" value="4.50 A"/>
    <property type="chains" value="X/x=2-40"/>
</dbReference>
<dbReference type="PDB" id="5H2F">
    <property type="method" value="X-ray"/>
    <property type="resolution" value="2.20 A"/>
    <property type="chains" value="X/x=2-38"/>
</dbReference>
<dbReference type="PDB" id="5KAF">
    <property type="method" value="X-ray"/>
    <property type="resolution" value="3.00 A"/>
    <property type="chains" value="X/x=1-41"/>
</dbReference>
<dbReference type="PDB" id="5KAI">
    <property type="method" value="X-ray"/>
    <property type="resolution" value="2.80 A"/>
    <property type="chains" value="X/x=1-41"/>
</dbReference>
<dbReference type="PDB" id="5MX2">
    <property type="method" value="X-ray"/>
    <property type="resolution" value="2.20 A"/>
    <property type="chains" value="X/x=1-41"/>
</dbReference>
<dbReference type="PDB" id="5TIS">
    <property type="method" value="X-ray"/>
    <property type="resolution" value="2.25 A"/>
    <property type="chains" value="X/x=1-41"/>
</dbReference>
<dbReference type="PDB" id="5ZZN">
    <property type="method" value="X-ray"/>
    <property type="resolution" value="2.10 A"/>
    <property type="chains" value="X/x=2-40"/>
</dbReference>
<dbReference type="PDB" id="6DHE">
    <property type="method" value="X-ray"/>
    <property type="resolution" value="2.05 A"/>
    <property type="chains" value="X/x=2-39"/>
</dbReference>
<dbReference type="PDB" id="6DHF">
    <property type="method" value="X-ray"/>
    <property type="resolution" value="2.08 A"/>
    <property type="chains" value="X/x=2-39"/>
</dbReference>
<dbReference type="PDB" id="6DHG">
    <property type="method" value="X-ray"/>
    <property type="resolution" value="2.50 A"/>
    <property type="chains" value="X/x=2-39"/>
</dbReference>
<dbReference type="PDB" id="6DHH">
    <property type="method" value="X-ray"/>
    <property type="resolution" value="2.20 A"/>
    <property type="chains" value="X/x=2-39"/>
</dbReference>
<dbReference type="PDB" id="6DHO">
    <property type="method" value="X-ray"/>
    <property type="resolution" value="2.07 A"/>
    <property type="chains" value="X/x=2-39"/>
</dbReference>
<dbReference type="PDB" id="6DHP">
    <property type="method" value="X-ray"/>
    <property type="resolution" value="2.04 A"/>
    <property type="chains" value="X/x=2-39"/>
</dbReference>
<dbReference type="PDB" id="6W1O">
    <property type="method" value="X-ray"/>
    <property type="resolution" value="2.08 A"/>
    <property type="chains" value="X/x=1-41"/>
</dbReference>
<dbReference type="PDB" id="6W1P">
    <property type="method" value="X-ray"/>
    <property type="resolution" value="2.26 A"/>
    <property type="chains" value="X/x=1-41"/>
</dbReference>
<dbReference type="PDB" id="6W1Q">
    <property type="method" value="X-ray"/>
    <property type="resolution" value="2.27 A"/>
    <property type="chains" value="X/x=1-41"/>
</dbReference>
<dbReference type="PDB" id="6W1R">
    <property type="method" value="X-ray"/>
    <property type="resolution" value="2.23 A"/>
    <property type="chains" value="X/x=1-41"/>
</dbReference>
<dbReference type="PDB" id="6W1T">
    <property type="method" value="X-ray"/>
    <property type="resolution" value="2.01 A"/>
    <property type="chains" value="X/x=1-41"/>
</dbReference>
<dbReference type="PDB" id="6W1U">
    <property type="method" value="X-ray"/>
    <property type="resolution" value="2.09 A"/>
    <property type="chains" value="X/x=1-41"/>
</dbReference>
<dbReference type="PDB" id="6W1V">
    <property type="method" value="X-ray"/>
    <property type="resolution" value="2.09 A"/>
    <property type="chains" value="X/x=1-41"/>
</dbReference>
<dbReference type="PDB" id="7NHO">
    <property type="method" value="EM"/>
    <property type="resolution" value="2.66 A"/>
    <property type="chains" value="X=1-41"/>
</dbReference>
<dbReference type="PDB" id="7NHP">
    <property type="method" value="EM"/>
    <property type="resolution" value="2.72 A"/>
    <property type="chains" value="X=1-41"/>
</dbReference>
<dbReference type="PDB" id="7NHQ">
    <property type="method" value="EM"/>
    <property type="resolution" value="2.68 A"/>
    <property type="chains" value="X=1-41"/>
</dbReference>
<dbReference type="PDB" id="7RF1">
    <property type="method" value="X-ray"/>
    <property type="resolution" value="1.89 A"/>
    <property type="chains" value="X/x=1-41"/>
</dbReference>
<dbReference type="PDB" id="7RF2">
    <property type="method" value="X-ray"/>
    <property type="resolution" value="2.08 A"/>
    <property type="chains" value="X/x=1-41"/>
</dbReference>
<dbReference type="PDB" id="7RF3">
    <property type="method" value="X-ray"/>
    <property type="resolution" value="2.26 A"/>
    <property type="chains" value="X/x=1-41"/>
</dbReference>
<dbReference type="PDB" id="7RF4">
    <property type="method" value="X-ray"/>
    <property type="resolution" value="2.27 A"/>
    <property type="chains" value="X/x=1-41"/>
</dbReference>
<dbReference type="PDB" id="7RF5">
    <property type="method" value="X-ray"/>
    <property type="resolution" value="2.23 A"/>
    <property type="chains" value="X/x=1-41"/>
</dbReference>
<dbReference type="PDB" id="7RF6">
    <property type="method" value="X-ray"/>
    <property type="resolution" value="2.01 A"/>
    <property type="chains" value="X/x=1-41"/>
</dbReference>
<dbReference type="PDB" id="7RF7">
    <property type="method" value="X-ray"/>
    <property type="resolution" value="2.09 A"/>
    <property type="chains" value="X/x=1-41"/>
</dbReference>
<dbReference type="PDB" id="7RF8">
    <property type="method" value="X-ray"/>
    <property type="resolution" value="2.09 A"/>
    <property type="chains" value="X/x=1-41"/>
</dbReference>
<dbReference type="PDB" id="7YQ2">
    <property type="method" value="X-ray"/>
    <property type="resolution" value="1.90 A"/>
    <property type="chains" value="X/x=1-41"/>
</dbReference>
<dbReference type="PDB" id="7YQ7">
    <property type="method" value="X-ray"/>
    <property type="resolution" value="1.90 A"/>
    <property type="chains" value="X/x=1-41"/>
</dbReference>
<dbReference type="PDB" id="8EZ5">
    <property type="method" value="X-ray"/>
    <property type="resolution" value="2.09 A"/>
    <property type="chains" value="X/x=1-41"/>
</dbReference>
<dbReference type="PDB" id="8F4C">
    <property type="method" value="X-ray"/>
    <property type="resolution" value="2.00 A"/>
    <property type="chains" value="X/x=1-41"/>
</dbReference>
<dbReference type="PDB" id="8F4D">
    <property type="method" value="X-ray"/>
    <property type="resolution" value="2.15 A"/>
    <property type="chains" value="X/x=1-41"/>
</dbReference>
<dbReference type="PDB" id="8F4E">
    <property type="method" value="X-ray"/>
    <property type="resolution" value="2.09 A"/>
    <property type="chains" value="X/x=1-41"/>
</dbReference>
<dbReference type="PDB" id="8F4F">
    <property type="method" value="X-ray"/>
    <property type="resolution" value="2.03 A"/>
    <property type="chains" value="X/x=1-41"/>
</dbReference>
<dbReference type="PDB" id="8F4G">
    <property type="method" value="X-ray"/>
    <property type="resolution" value="2.03 A"/>
    <property type="chains" value="X/x=1-41"/>
</dbReference>
<dbReference type="PDB" id="8F4H">
    <property type="method" value="X-ray"/>
    <property type="resolution" value="2.10 A"/>
    <property type="chains" value="X/x=1-41"/>
</dbReference>
<dbReference type="PDB" id="8F4I">
    <property type="method" value="X-ray"/>
    <property type="resolution" value="2.00 A"/>
    <property type="chains" value="X/x=1-41"/>
</dbReference>
<dbReference type="PDB" id="8F4J">
    <property type="method" value="X-ray"/>
    <property type="resolution" value="2.00 A"/>
    <property type="chains" value="X/x=1-41"/>
</dbReference>
<dbReference type="PDB" id="8F4K">
    <property type="method" value="X-ray"/>
    <property type="resolution" value="2.16 A"/>
    <property type="chains" value="X/x=1-41"/>
</dbReference>
<dbReference type="PDB" id="9EVX">
    <property type="method" value="EM"/>
    <property type="resolution" value="1.71 A"/>
    <property type="chains" value="X/x=1-41"/>
</dbReference>
<dbReference type="PDBsum" id="1S5L"/>
<dbReference type="PDBsum" id="3KZI"/>
<dbReference type="PDBsum" id="4FBY"/>
<dbReference type="PDBsum" id="4IXQ"/>
<dbReference type="PDBsum" id="4IXR"/>
<dbReference type="PDBsum" id="4PBU"/>
<dbReference type="PDBsum" id="4PJ0"/>
<dbReference type="PDBsum" id="4RVY"/>
<dbReference type="PDBsum" id="4TNH"/>
<dbReference type="PDBsum" id="4TNI"/>
<dbReference type="PDBsum" id="4TNJ"/>
<dbReference type="PDBsum" id="4TNK"/>
<dbReference type="PDBsum" id="4V62"/>
<dbReference type="PDBsum" id="4V82"/>
<dbReference type="PDBsum" id="5E79"/>
<dbReference type="PDBsum" id="5E7C"/>
<dbReference type="PDBsum" id="5H2F"/>
<dbReference type="PDBsum" id="5KAF"/>
<dbReference type="PDBsum" id="5KAI"/>
<dbReference type="PDBsum" id="5MX2"/>
<dbReference type="PDBsum" id="5TIS"/>
<dbReference type="PDBsum" id="5ZZN"/>
<dbReference type="PDBsum" id="6DHE"/>
<dbReference type="PDBsum" id="6DHF"/>
<dbReference type="PDBsum" id="6DHG"/>
<dbReference type="PDBsum" id="6DHH"/>
<dbReference type="PDBsum" id="6DHO"/>
<dbReference type="PDBsum" id="6DHP"/>
<dbReference type="PDBsum" id="6W1O"/>
<dbReference type="PDBsum" id="6W1P"/>
<dbReference type="PDBsum" id="6W1Q"/>
<dbReference type="PDBsum" id="6W1R"/>
<dbReference type="PDBsum" id="6W1T"/>
<dbReference type="PDBsum" id="6W1U"/>
<dbReference type="PDBsum" id="6W1V"/>
<dbReference type="PDBsum" id="7NHO"/>
<dbReference type="PDBsum" id="7NHP"/>
<dbReference type="PDBsum" id="7NHQ"/>
<dbReference type="PDBsum" id="7RF1"/>
<dbReference type="PDBsum" id="7RF2"/>
<dbReference type="PDBsum" id="7RF3"/>
<dbReference type="PDBsum" id="7RF4"/>
<dbReference type="PDBsum" id="7RF5"/>
<dbReference type="PDBsum" id="7RF6"/>
<dbReference type="PDBsum" id="7RF7"/>
<dbReference type="PDBsum" id="7RF8"/>
<dbReference type="PDBsum" id="7YQ2"/>
<dbReference type="PDBsum" id="7YQ7"/>
<dbReference type="PDBsum" id="8EZ5"/>
<dbReference type="PDBsum" id="8F4C"/>
<dbReference type="PDBsum" id="8F4D"/>
<dbReference type="PDBsum" id="8F4E"/>
<dbReference type="PDBsum" id="8F4F"/>
<dbReference type="PDBsum" id="8F4G"/>
<dbReference type="PDBsum" id="8F4H"/>
<dbReference type="PDBsum" id="8F4I"/>
<dbReference type="PDBsum" id="8F4J"/>
<dbReference type="PDBsum" id="8F4K"/>
<dbReference type="PDBsum" id="9EVX"/>
<dbReference type="EMDB" id="EMD-12335"/>
<dbReference type="EMDB" id="EMD-12336"/>
<dbReference type="EMDB" id="EMD-12337"/>
<dbReference type="EMDB" id="EMD-50019"/>
<dbReference type="SMR" id="Q9F1R6"/>
<dbReference type="DIP" id="DIP-48503N"/>
<dbReference type="IntAct" id="Q9F1R6">
    <property type="interactions" value="1"/>
</dbReference>
<dbReference type="STRING" id="197221.gene:10748622"/>
<dbReference type="EnsemblBacteria" id="BAC09565">
    <property type="protein sequence ID" value="BAC09565"/>
    <property type="gene ID" value="BAC09565"/>
</dbReference>
<dbReference type="KEGG" id="tel:tsr2013"/>
<dbReference type="PATRIC" id="fig|197221.4.peg.2106"/>
<dbReference type="EvolutionaryTrace" id="Q9F1R6"/>
<dbReference type="Proteomes" id="UP000000440">
    <property type="component" value="Chromosome"/>
</dbReference>
<dbReference type="GO" id="GO:0009523">
    <property type="term" value="C:photosystem II"/>
    <property type="evidence" value="ECO:0007669"/>
    <property type="project" value="UniProtKB-KW"/>
</dbReference>
<dbReference type="GO" id="GO:0031676">
    <property type="term" value="C:plasma membrane-derived thylakoid membrane"/>
    <property type="evidence" value="ECO:0007669"/>
    <property type="project" value="UniProtKB-SubCell"/>
</dbReference>
<dbReference type="GO" id="GO:0015979">
    <property type="term" value="P:photosynthesis"/>
    <property type="evidence" value="ECO:0007669"/>
    <property type="project" value="UniProtKB-UniRule"/>
</dbReference>
<dbReference type="Gene3D" id="1.20.5.510">
    <property type="entry name" value="Single helix bin"/>
    <property type="match status" value="1"/>
</dbReference>
<dbReference type="HAMAP" id="MF_01386">
    <property type="entry name" value="PSII_PsbX_1"/>
    <property type="match status" value="1"/>
</dbReference>
<dbReference type="InterPro" id="IPR009518">
    <property type="entry name" value="PSII_PsbX"/>
</dbReference>
<dbReference type="InterPro" id="IPR023431">
    <property type="entry name" value="PSII_PsbX_type_1_subfam"/>
</dbReference>
<dbReference type="Pfam" id="PF06596">
    <property type="entry name" value="PsbX"/>
    <property type="match status" value="1"/>
</dbReference>
<comment type="function">
    <text evidence="1 2 7 8 11">Involved in the binding and/or turnover of quinones at the Q(B) site of photosystem II (PSII). PSII is a light-driven water plastoquinone oxidoreductase, using light energy to abstract electrons from H(2)O, generating a proton gradient subsequently used for ATP formation.</text>
</comment>
<comment type="cofactor">
    <text evidence="3 4 5 6 7 8 9 10 11 12">PSII binds multiple chlorophylls, carotenoids and specific lipids.</text>
</comment>
<comment type="subunit">
    <text evidence="1 3 6 7 8 9 10 11 13">PSII is composed of 1 copy each of membrane proteins PsbA, PsbB, PsbC, PsbD, PsbE, PsbF, PsbH, PsbI, PsbJ, PsbK, PsbL, PsbM, PsbT, PsbX, PsbY, PsbZ, Psb30/Ycf12, peripheral proteins PsbO, CyanoQ (PsbQ), PsbU, PsbV and a large number of cofactors. It forms dimeric complexes (PubMed:14764885, PubMed:19219048, PubMed:20558739, PubMed:21367867, PubMed:22665786, PubMed:23413188, PubMed:25006873). Part of a photosystem II (PSII) assembly intermediate complex PSII-I; crystallized from a strain deleted of psbJ, it forms monomeric PSII before addition of the oxygen evolving complex. PSII-I includes 3 assembly factors not found in mature PSII (Psb27, Psb28 and Psb34) (PubMed:33846594).</text>
</comment>
<comment type="subcellular location">
    <subcellularLocation>
        <location evidence="1 3 4 5 6 7 8 9 10 11 12 13">Cellular thylakoid membrane</location>
        <topology evidence="1 3 4 5 6 7 8 9 10 11 12 13">Single-pass membrane protein</topology>
    </subcellularLocation>
</comment>
<comment type="mass spectrometry" mass="4192.0" error="4.0" method="MALDI" evidence="6">
    <text>Authors suggest the N-terminus may result from processing of a signal peptide.</text>
</comment>
<comment type="mass spectrometry" mass="4190.0" method="MALDI" evidence="7">
    <text>Authors suggest the N-terminus may result from processing of a signal peptide.</text>
</comment>
<comment type="similarity">
    <text evidence="1 14">Belongs to the PsbX family. Type 1 subfamily.</text>
</comment>
<comment type="sequence caution" evidence="14">
    <conflict type="erroneous initiation">
        <sequence resource="EMBL-CDS" id="BAB16114"/>
    </conflict>
    <text>Extended N-terminus.</text>
</comment>
<comment type="sequence caution" evidence="14">
    <conflict type="erroneous initiation">
        <sequence resource="EMBL-CDS" id="BAC09565"/>
    </conflict>
    <text>Extended N-terminus.</text>
</comment>
<feature type="initiator methionine" description="Removed" evidence="4 5">
    <location>
        <position position="1"/>
    </location>
</feature>
<feature type="chain" id="PRO_0000345378" description="Photosystem II reaction center protein X">
    <location>
        <begin position="2"/>
        <end position="41"/>
    </location>
</feature>
<feature type="topological domain" description="Lumenal" evidence="13 17">
    <location>
        <begin position="2"/>
        <end position="6"/>
    </location>
</feature>
<feature type="transmembrane region" description="Helical" evidence="13 17">
    <location>
        <begin position="7"/>
        <end position="29"/>
    </location>
</feature>
<feature type="topological domain" description="Cytoplasmic" evidence="13 17">
    <location>
        <begin position="30"/>
        <end position="41"/>
    </location>
</feature>
<feature type="helix" evidence="18">
    <location>
        <begin position="5"/>
        <end position="34"/>
    </location>
</feature>
<sequence length="41" mass="4319">MTITPSLKGFFIGLLSGAVVLGLTFAVLIAISQIDKVQRSL</sequence>
<evidence type="ECO:0000255" key="1">
    <source>
        <dbReference type="HAMAP-Rule" id="MF_01386"/>
    </source>
</evidence>
<evidence type="ECO:0000269" key="2">
    <source>
    </source>
</evidence>
<evidence type="ECO:0000269" key="3">
    <source>
    </source>
</evidence>
<evidence type="ECO:0000269" key="4">
    <source>
    </source>
</evidence>
<evidence type="ECO:0000269" key="5">
    <source>
    </source>
</evidence>
<evidence type="ECO:0000269" key="6">
    <source>
    </source>
</evidence>
<evidence type="ECO:0000269" key="7">
    <source>
    </source>
</evidence>
<evidence type="ECO:0000269" key="8">
    <source>
    </source>
</evidence>
<evidence type="ECO:0000269" key="9">
    <source>
    </source>
</evidence>
<evidence type="ECO:0000269" key="10">
    <source>
    </source>
</evidence>
<evidence type="ECO:0000269" key="11">
    <source>
    </source>
</evidence>
<evidence type="ECO:0000269" key="12">
    <source>
    </source>
</evidence>
<evidence type="ECO:0000269" key="13">
    <source>
    </source>
</evidence>
<evidence type="ECO:0000305" key="14"/>
<evidence type="ECO:0007744" key="15">
    <source>
        <dbReference type="PDB" id="7NHO"/>
    </source>
</evidence>
<evidence type="ECO:0007744" key="16">
    <source>
        <dbReference type="PDB" id="7NHP"/>
    </source>
</evidence>
<evidence type="ECO:0007744" key="17">
    <source>
        <dbReference type="PDB" id="7NHQ"/>
    </source>
</evidence>
<evidence type="ECO:0007829" key="18">
    <source>
        <dbReference type="PDB" id="7YQ2"/>
    </source>
</evidence>
<gene>
    <name evidence="1" type="primary">psbX</name>
    <name type="ordered locus">tsr2013</name>
</gene>